<reference key="1">
    <citation type="submission" date="2006-01" db="EMBL/GenBank/DDBJ databases">
        <title>Complete sequence of Rhodopseudomonas palustris HaA2.</title>
        <authorList>
            <consortium name="US DOE Joint Genome Institute"/>
            <person name="Copeland A."/>
            <person name="Lucas S."/>
            <person name="Lapidus A."/>
            <person name="Barry K."/>
            <person name="Detter J.C."/>
            <person name="Glavina T."/>
            <person name="Hammon N."/>
            <person name="Israni S."/>
            <person name="Pitluck S."/>
            <person name="Chain P."/>
            <person name="Malfatti S."/>
            <person name="Shin M."/>
            <person name="Vergez L."/>
            <person name="Schmutz J."/>
            <person name="Larimer F."/>
            <person name="Land M."/>
            <person name="Hauser L."/>
            <person name="Pelletier D.A."/>
            <person name="Kyrpides N."/>
            <person name="Anderson I."/>
            <person name="Oda Y."/>
            <person name="Harwood C.S."/>
            <person name="Richardson P."/>
        </authorList>
    </citation>
    <scope>NUCLEOTIDE SEQUENCE [LARGE SCALE GENOMIC DNA]</scope>
    <source>
        <strain>HaA2</strain>
    </source>
</reference>
<proteinExistence type="inferred from homology"/>
<feature type="chain" id="PRO_0000291237" description="Tetraacyldisaccharide 4'-kinase">
    <location>
        <begin position="1"/>
        <end position="338"/>
    </location>
</feature>
<feature type="binding site" evidence="1">
    <location>
        <begin position="51"/>
        <end position="58"/>
    </location>
    <ligand>
        <name>ATP</name>
        <dbReference type="ChEBI" id="CHEBI:30616"/>
    </ligand>
</feature>
<name>LPXK_RHOP2</name>
<sequence>MREPGFWHRPPSWLSRLLLPLGAVYGEITSWRMRKTGVEAGAPVICVGNYHLGGAGKTPTTLALVRLLRDLDEQPIVLSRGYGGRLKGPILVDPQRHDAADVGDEPLMMARRVPVVVARDRVDGAALARSQGASLLVMDDGFQNPALVKHLSLIVIDSRRGVGNGCVFPAGPLRAPLPLQIERTDALIIIGDGTAADEVAAAIATRGGVVLRARLRPDAASVERLKGQRVLAFAGIGDPARYFATLRASGIDVADQRAFADHHPFTVAELESLAETARREGLTLVTTEKDLARIGAAAATLGSAIVPFAVTLAVEDEPSLRLFLLEQINRARTKPRAG</sequence>
<comment type="function">
    <text evidence="1">Transfers the gamma-phosphate of ATP to the 4'-position of a tetraacyldisaccharide 1-phosphate intermediate (termed DS-1-P) to form tetraacyldisaccharide 1,4'-bis-phosphate (lipid IVA).</text>
</comment>
<comment type="catalytic activity">
    <reaction evidence="1">
        <text>a lipid A disaccharide + ATP = a lipid IVA + ADP + H(+)</text>
        <dbReference type="Rhea" id="RHEA:67840"/>
        <dbReference type="ChEBI" id="CHEBI:15378"/>
        <dbReference type="ChEBI" id="CHEBI:30616"/>
        <dbReference type="ChEBI" id="CHEBI:176343"/>
        <dbReference type="ChEBI" id="CHEBI:176425"/>
        <dbReference type="ChEBI" id="CHEBI:456216"/>
        <dbReference type="EC" id="2.7.1.130"/>
    </reaction>
</comment>
<comment type="pathway">
    <text evidence="1">Glycolipid biosynthesis; lipid IV(A) biosynthesis; lipid IV(A) from (3R)-3-hydroxytetradecanoyl-[acyl-carrier-protein] and UDP-N-acetyl-alpha-D-glucosamine: step 6/6.</text>
</comment>
<comment type="similarity">
    <text evidence="1">Belongs to the LpxK family.</text>
</comment>
<dbReference type="EC" id="2.7.1.130" evidence="1"/>
<dbReference type="EMBL" id="CP000250">
    <property type="protein sequence ID" value="ABD06564.1"/>
    <property type="molecule type" value="Genomic_DNA"/>
</dbReference>
<dbReference type="RefSeq" id="WP_011440752.1">
    <property type="nucleotide sequence ID" value="NC_007778.1"/>
</dbReference>
<dbReference type="SMR" id="Q2IYZ6"/>
<dbReference type="STRING" id="316058.RPB_1856"/>
<dbReference type="KEGG" id="rpb:RPB_1856"/>
<dbReference type="eggNOG" id="COG1663">
    <property type="taxonomic scope" value="Bacteria"/>
</dbReference>
<dbReference type="HOGENOM" id="CLU_038816_0_0_5"/>
<dbReference type="OrthoDB" id="9766423at2"/>
<dbReference type="UniPathway" id="UPA00359">
    <property type="reaction ID" value="UER00482"/>
</dbReference>
<dbReference type="Proteomes" id="UP000008809">
    <property type="component" value="Chromosome"/>
</dbReference>
<dbReference type="GO" id="GO:0005886">
    <property type="term" value="C:plasma membrane"/>
    <property type="evidence" value="ECO:0007669"/>
    <property type="project" value="TreeGrafter"/>
</dbReference>
<dbReference type="GO" id="GO:0005524">
    <property type="term" value="F:ATP binding"/>
    <property type="evidence" value="ECO:0007669"/>
    <property type="project" value="UniProtKB-UniRule"/>
</dbReference>
<dbReference type="GO" id="GO:0009029">
    <property type="term" value="F:tetraacyldisaccharide 4'-kinase activity"/>
    <property type="evidence" value="ECO:0007669"/>
    <property type="project" value="UniProtKB-UniRule"/>
</dbReference>
<dbReference type="GO" id="GO:0009245">
    <property type="term" value="P:lipid A biosynthetic process"/>
    <property type="evidence" value="ECO:0007669"/>
    <property type="project" value="UniProtKB-UniRule"/>
</dbReference>
<dbReference type="GO" id="GO:0009244">
    <property type="term" value="P:lipopolysaccharide core region biosynthetic process"/>
    <property type="evidence" value="ECO:0007669"/>
    <property type="project" value="TreeGrafter"/>
</dbReference>
<dbReference type="HAMAP" id="MF_00409">
    <property type="entry name" value="LpxK"/>
    <property type="match status" value="1"/>
</dbReference>
<dbReference type="InterPro" id="IPR003758">
    <property type="entry name" value="LpxK"/>
</dbReference>
<dbReference type="InterPro" id="IPR027417">
    <property type="entry name" value="P-loop_NTPase"/>
</dbReference>
<dbReference type="NCBIfam" id="TIGR00682">
    <property type="entry name" value="lpxK"/>
    <property type="match status" value="1"/>
</dbReference>
<dbReference type="PANTHER" id="PTHR42724">
    <property type="entry name" value="TETRAACYLDISACCHARIDE 4'-KINASE"/>
    <property type="match status" value="1"/>
</dbReference>
<dbReference type="PANTHER" id="PTHR42724:SF1">
    <property type="entry name" value="TETRAACYLDISACCHARIDE 4'-KINASE, MITOCHONDRIAL-RELATED"/>
    <property type="match status" value="1"/>
</dbReference>
<dbReference type="Pfam" id="PF02606">
    <property type="entry name" value="LpxK"/>
    <property type="match status" value="1"/>
</dbReference>
<dbReference type="SUPFAM" id="SSF52540">
    <property type="entry name" value="P-loop containing nucleoside triphosphate hydrolases"/>
    <property type="match status" value="1"/>
</dbReference>
<organism>
    <name type="scientific">Rhodopseudomonas palustris (strain HaA2)</name>
    <dbReference type="NCBI Taxonomy" id="316058"/>
    <lineage>
        <taxon>Bacteria</taxon>
        <taxon>Pseudomonadati</taxon>
        <taxon>Pseudomonadota</taxon>
        <taxon>Alphaproteobacteria</taxon>
        <taxon>Hyphomicrobiales</taxon>
        <taxon>Nitrobacteraceae</taxon>
        <taxon>Rhodopseudomonas</taxon>
    </lineage>
</organism>
<keyword id="KW-0067">ATP-binding</keyword>
<keyword id="KW-0418">Kinase</keyword>
<keyword id="KW-0441">Lipid A biosynthesis</keyword>
<keyword id="KW-0444">Lipid biosynthesis</keyword>
<keyword id="KW-0443">Lipid metabolism</keyword>
<keyword id="KW-0547">Nucleotide-binding</keyword>
<keyword id="KW-1185">Reference proteome</keyword>
<keyword id="KW-0808">Transferase</keyword>
<gene>
    <name evidence="1" type="primary">lpxK</name>
    <name type="ordered locus">RPB_1856</name>
</gene>
<evidence type="ECO:0000255" key="1">
    <source>
        <dbReference type="HAMAP-Rule" id="MF_00409"/>
    </source>
</evidence>
<protein>
    <recommendedName>
        <fullName evidence="1">Tetraacyldisaccharide 4'-kinase</fullName>
        <ecNumber evidence="1">2.7.1.130</ecNumber>
    </recommendedName>
    <alternativeName>
        <fullName evidence="1">Lipid A 4'-kinase</fullName>
    </alternativeName>
</protein>
<accession>Q2IYZ6</accession>